<accession>O43004</accession>
<dbReference type="EMBL" id="CU329671">
    <property type="protein sequence ID" value="CAA17885.1"/>
    <property type="molecule type" value="Genomic_DNA"/>
</dbReference>
<dbReference type="PIR" id="T40144">
    <property type="entry name" value="T40144"/>
</dbReference>
<dbReference type="RefSeq" id="NP_596434.1">
    <property type="nucleotide sequence ID" value="NM_001022353.2"/>
</dbReference>
<dbReference type="SMR" id="O43004"/>
<dbReference type="BioGRID" id="276902">
    <property type="interactions" value="13"/>
</dbReference>
<dbReference type="FunCoup" id="O43004">
    <property type="interactions" value="383"/>
</dbReference>
<dbReference type="STRING" id="284812.O43004"/>
<dbReference type="iPTMnet" id="O43004"/>
<dbReference type="PaxDb" id="4896-SPBC2G2.05.1"/>
<dbReference type="EnsemblFungi" id="SPBC2G2.05.1">
    <property type="protein sequence ID" value="SPBC2G2.05.1:pep"/>
    <property type="gene ID" value="SPBC2G2.05"/>
</dbReference>
<dbReference type="GeneID" id="2540373"/>
<dbReference type="KEGG" id="spo:2540373"/>
<dbReference type="PomBase" id="SPBC2G2.05">
    <property type="gene designation" value="rpl1603"/>
</dbReference>
<dbReference type="VEuPathDB" id="FungiDB:SPBC2G2.05"/>
<dbReference type="eggNOG" id="KOG3204">
    <property type="taxonomic scope" value="Eukaryota"/>
</dbReference>
<dbReference type="HOGENOM" id="CLU_076922_0_0_1"/>
<dbReference type="InParanoid" id="O43004"/>
<dbReference type="OMA" id="GMLPWKT"/>
<dbReference type="PhylomeDB" id="O43004"/>
<dbReference type="PRO" id="PR:O43004"/>
<dbReference type="Proteomes" id="UP000002485">
    <property type="component" value="Chromosome II"/>
</dbReference>
<dbReference type="GO" id="GO:0005829">
    <property type="term" value="C:cytosol"/>
    <property type="evidence" value="ECO:0007005"/>
    <property type="project" value="PomBase"/>
</dbReference>
<dbReference type="GO" id="GO:0022625">
    <property type="term" value="C:cytosolic large ribosomal subunit"/>
    <property type="evidence" value="ECO:0000318"/>
    <property type="project" value="GO_Central"/>
</dbReference>
<dbReference type="GO" id="GO:0005730">
    <property type="term" value="C:nucleolus"/>
    <property type="evidence" value="ECO:0007005"/>
    <property type="project" value="PomBase"/>
</dbReference>
<dbReference type="GO" id="GO:0005840">
    <property type="term" value="C:ribosome"/>
    <property type="evidence" value="ECO:0000318"/>
    <property type="project" value="GO_Central"/>
</dbReference>
<dbReference type="GO" id="GO:0003729">
    <property type="term" value="F:mRNA binding"/>
    <property type="evidence" value="ECO:0000318"/>
    <property type="project" value="GO_Central"/>
</dbReference>
<dbReference type="GO" id="GO:0003735">
    <property type="term" value="F:structural constituent of ribosome"/>
    <property type="evidence" value="ECO:0000318"/>
    <property type="project" value="GO_Central"/>
</dbReference>
<dbReference type="GO" id="GO:0002181">
    <property type="term" value="P:cytoplasmic translation"/>
    <property type="evidence" value="ECO:0000266"/>
    <property type="project" value="PomBase"/>
</dbReference>
<dbReference type="GO" id="GO:0017148">
    <property type="term" value="P:negative regulation of translation"/>
    <property type="evidence" value="ECO:0000318"/>
    <property type="project" value="GO_Central"/>
</dbReference>
<dbReference type="CDD" id="cd00392">
    <property type="entry name" value="Ribosomal_L13"/>
    <property type="match status" value="1"/>
</dbReference>
<dbReference type="FunFam" id="3.90.1180.10:FF:000002">
    <property type="entry name" value="60S ribosomal protein L16"/>
    <property type="match status" value="1"/>
</dbReference>
<dbReference type="Gene3D" id="6.10.250.3250">
    <property type="match status" value="1"/>
</dbReference>
<dbReference type="Gene3D" id="3.90.1180.10">
    <property type="entry name" value="Ribosomal protein L13"/>
    <property type="match status" value="1"/>
</dbReference>
<dbReference type="HAMAP" id="MF_01366">
    <property type="entry name" value="Ribosomal_uL13"/>
    <property type="match status" value="1"/>
</dbReference>
<dbReference type="InterPro" id="IPR005822">
    <property type="entry name" value="Ribosomal_uL13"/>
</dbReference>
<dbReference type="InterPro" id="IPR023563">
    <property type="entry name" value="Ribosomal_uL13_CS"/>
</dbReference>
<dbReference type="InterPro" id="IPR005755">
    <property type="entry name" value="Ribosomal_uL13_euk/arc"/>
</dbReference>
<dbReference type="InterPro" id="IPR036899">
    <property type="entry name" value="Ribosomal_uL13_sf"/>
</dbReference>
<dbReference type="NCBIfam" id="TIGR01077">
    <property type="entry name" value="L13_A_E"/>
    <property type="match status" value="1"/>
</dbReference>
<dbReference type="PANTHER" id="PTHR11545:SF3">
    <property type="entry name" value="LARGE RIBOSOMAL SUBUNIT PROTEIN UL13"/>
    <property type="match status" value="1"/>
</dbReference>
<dbReference type="PANTHER" id="PTHR11545">
    <property type="entry name" value="RIBOSOMAL PROTEIN L13"/>
    <property type="match status" value="1"/>
</dbReference>
<dbReference type="Pfam" id="PF00572">
    <property type="entry name" value="Ribosomal_L13"/>
    <property type="match status" value="1"/>
</dbReference>
<dbReference type="SUPFAM" id="SSF52161">
    <property type="entry name" value="Ribosomal protein L13"/>
    <property type="match status" value="1"/>
</dbReference>
<dbReference type="PROSITE" id="PS00783">
    <property type="entry name" value="RIBOSOMAL_L13"/>
    <property type="match status" value="1"/>
</dbReference>
<comment type="function">
    <text evidence="1">Component of the ribosome, a large ribonucleoprotein complex responsible for the synthesis of proteins in the cell. The small ribosomal subunit (SSU) binds messenger RNAs (mRNAs) and translates the encoded message by selecting cognate aminoacyl-transfer RNA (tRNA) molecules. The large subunit (LSU) contains the ribosomal catalytic site termed the peptidyl transferase center (PTC), which catalyzes the formation of peptide bonds, thereby polymerizing the amino acids delivered by tRNAs into a polypeptide chain. The nascent polypeptides leave the ribosome through a tunnel in the LSU and interact with protein factors that function in enzymatic processing, targeting, and the membrane insertion of nascent chains at the exit of the ribosomal tunnel.</text>
</comment>
<comment type="subunit">
    <text evidence="1">Component of the large ribosomal subunit (LSU). Mature yeast ribosomes consist of a small (40S) and a large (60S) subunit. The 40S small subunit contains 1 molecule of ribosomal RNA (18S rRNA) and at least 33 different proteins. The large 60S subunit contains 3 rRNA molecules (25S, 5.8S and 5S rRNA) and at least 46 different proteins.</text>
</comment>
<comment type="subcellular location">
    <subcellularLocation>
        <location evidence="2">Cytoplasm</location>
    </subcellularLocation>
    <subcellularLocation>
        <location evidence="2">Nucleus</location>
        <location evidence="2">Nucleolus</location>
    </subcellularLocation>
</comment>
<comment type="miscellaneous">
    <text>There are 3 genes for uL13 in S.pombe.</text>
</comment>
<comment type="similarity">
    <text evidence="3">Belongs to the universal ribosomal protein uL13 family.</text>
</comment>
<gene>
    <name type="primary">rpl1603</name>
    <name type="synonym">rpl16c</name>
    <name type="ORF">SPBC2G2.05</name>
</gene>
<organism>
    <name type="scientific">Schizosaccharomyces pombe (strain 972 / ATCC 24843)</name>
    <name type="common">Fission yeast</name>
    <dbReference type="NCBI Taxonomy" id="284812"/>
    <lineage>
        <taxon>Eukaryota</taxon>
        <taxon>Fungi</taxon>
        <taxon>Dikarya</taxon>
        <taxon>Ascomycota</taxon>
        <taxon>Taphrinomycotina</taxon>
        <taxon>Schizosaccharomycetes</taxon>
        <taxon>Schizosaccharomycetales</taxon>
        <taxon>Schizosaccharomycetaceae</taxon>
        <taxon>Schizosaccharomyces</taxon>
    </lineage>
</organism>
<sequence length="197" mass="22353">MSEFQKLVIIDAKGHLMGRLASTVAKQLLAGQKVVVVRCEELNISGHFFRNKLKYLAYLRKACRYNPSRGAFHFRAPSRIFTKAVRGMLPHKTTRGNIALKNLQALEGIPPPFDKQKRLVVPAALRVLRLKPSRKYCTIGRLSSEVGWKYKNIVSKLEERRKIKSAAFYQAKSANQKHINVAKTKSSVNEKLAVFGY</sequence>
<protein>
    <recommendedName>
        <fullName evidence="3">Large ribosomal subunit protein uL13C</fullName>
    </recommendedName>
    <alternativeName>
        <fullName>60S ribosomal protein L16-C</fullName>
    </alternativeName>
</protein>
<keyword id="KW-0963">Cytoplasm</keyword>
<keyword id="KW-0539">Nucleus</keyword>
<keyword id="KW-1185">Reference proteome</keyword>
<keyword id="KW-0687">Ribonucleoprotein</keyword>
<keyword id="KW-0689">Ribosomal protein</keyword>
<feature type="chain" id="PRO_0000133790" description="Large ribosomal subunit protein uL13C">
    <location>
        <begin position="1"/>
        <end position="197"/>
    </location>
</feature>
<reference key="1">
    <citation type="journal article" date="2002" name="Nature">
        <title>The genome sequence of Schizosaccharomyces pombe.</title>
        <authorList>
            <person name="Wood V."/>
            <person name="Gwilliam R."/>
            <person name="Rajandream M.A."/>
            <person name="Lyne M.H."/>
            <person name="Lyne R."/>
            <person name="Stewart A."/>
            <person name="Sgouros J.G."/>
            <person name="Peat N."/>
            <person name="Hayles J."/>
            <person name="Baker S.G."/>
            <person name="Basham D."/>
            <person name="Bowman S."/>
            <person name="Brooks K."/>
            <person name="Brown D."/>
            <person name="Brown S."/>
            <person name="Chillingworth T."/>
            <person name="Churcher C.M."/>
            <person name="Collins M."/>
            <person name="Connor R."/>
            <person name="Cronin A."/>
            <person name="Davis P."/>
            <person name="Feltwell T."/>
            <person name="Fraser A."/>
            <person name="Gentles S."/>
            <person name="Goble A."/>
            <person name="Hamlin N."/>
            <person name="Harris D.E."/>
            <person name="Hidalgo J."/>
            <person name="Hodgson G."/>
            <person name="Holroyd S."/>
            <person name="Hornsby T."/>
            <person name="Howarth S."/>
            <person name="Huckle E.J."/>
            <person name="Hunt S."/>
            <person name="Jagels K."/>
            <person name="James K.D."/>
            <person name="Jones L."/>
            <person name="Jones M."/>
            <person name="Leather S."/>
            <person name="McDonald S."/>
            <person name="McLean J."/>
            <person name="Mooney P."/>
            <person name="Moule S."/>
            <person name="Mungall K.L."/>
            <person name="Murphy L.D."/>
            <person name="Niblett D."/>
            <person name="Odell C."/>
            <person name="Oliver K."/>
            <person name="O'Neil S."/>
            <person name="Pearson D."/>
            <person name="Quail M.A."/>
            <person name="Rabbinowitsch E."/>
            <person name="Rutherford K.M."/>
            <person name="Rutter S."/>
            <person name="Saunders D."/>
            <person name="Seeger K."/>
            <person name="Sharp S."/>
            <person name="Skelton J."/>
            <person name="Simmonds M.N."/>
            <person name="Squares R."/>
            <person name="Squares S."/>
            <person name="Stevens K."/>
            <person name="Taylor K."/>
            <person name="Taylor R.G."/>
            <person name="Tivey A."/>
            <person name="Walsh S.V."/>
            <person name="Warren T."/>
            <person name="Whitehead S."/>
            <person name="Woodward J.R."/>
            <person name="Volckaert G."/>
            <person name="Aert R."/>
            <person name="Robben J."/>
            <person name="Grymonprez B."/>
            <person name="Weltjens I."/>
            <person name="Vanstreels E."/>
            <person name="Rieger M."/>
            <person name="Schaefer M."/>
            <person name="Mueller-Auer S."/>
            <person name="Gabel C."/>
            <person name="Fuchs M."/>
            <person name="Duesterhoeft A."/>
            <person name="Fritzc C."/>
            <person name="Holzer E."/>
            <person name="Moestl D."/>
            <person name="Hilbert H."/>
            <person name="Borzym K."/>
            <person name="Langer I."/>
            <person name="Beck A."/>
            <person name="Lehrach H."/>
            <person name="Reinhardt R."/>
            <person name="Pohl T.M."/>
            <person name="Eger P."/>
            <person name="Zimmermann W."/>
            <person name="Wedler H."/>
            <person name="Wambutt R."/>
            <person name="Purnelle B."/>
            <person name="Goffeau A."/>
            <person name="Cadieu E."/>
            <person name="Dreano S."/>
            <person name="Gloux S."/>
            <person name="Lelaure V."/>
            <person name="Mottier S."/>
            <person name="Galibert F."/>
            <person name="Aves S.J."/>
            <person name="Xiang Z."/>
            <person name="Hunt C."/>
            <person name="Moore K."/>
            <person name="Hurst S.M."/>
            <person name="Lucas M."/>
            <person name="Rochet M."/>
            <person name="Gaillardin C."/>
            <person name="Tallada V.A."/>
            <person name="Garzon A."/>
            <person name="Thode G."/>
            <person name="Daga R.R."/>
            <person name="Cruzado L."/>
            <person name="Jimenez J."/>
            <person name="Sanchez M."/>
            <person name="del Rey F."/>
            <person name="Benito J."/>
            <person name="Dominguez A."/>
            <person name="Revuelta J.L."/>
            <person name="Moreno S."/>
            <person name="Armstrong J."/>
            <person name="Forsburg S.L."/>
            <person name="Cerutti L."/>
            <person name="Lowe T."/>
            <person name="McCombie W.R."/>
            <person name="Paulsen I."/>
            <person name="Potashkin J."/>
            <person name="Shpakovski G.V."/>
            <person name="Ussery D."/>
            <person name="Barrell B.G."/>
            <person name="Nurse P."/>
        </authorList>
    </citation>
    <scope>NUCLEOTIDE SEQUENCE [LARGE SCALE GENOMIC DNA]</scope>
    <source>
        <strain>972 / ATCC 24843</strain>
    </source>
</reference>
<reference key="2">
    <citation type="journal article" date="2006" name="Nat. Biotechnol.">
        <title>ORFeome cloning and global analysis of protein localization in the fission yeast Schizosaccharomyces pombe.</title>
        <authorList>
            <person name="Matsuyama A."/>
            <person name="Arai R."/>
            <person name="Yashiroda Y."/>
            <person name="Shirai A."/>
            <person name="Kamata A."/>
            <person name="Sekido S."/>
            <person name="Kobayashi Y."/>
            <person name="Hashimoto A."/>
            <person name="Hamamoto M."/>
            <person name="Hiraoka Y."/>
            <person name="Horinouchi S."/>
            <person name="Yoshida M."/>
        </authorList>
    </citation>
    <scope>SUBCELLULAR LOCATION [LARGE SCALE ANALYSIS]</scope>
</reference>
<name>RL16C_SCHPO</name>
<proteinExistence type="inferred from homology"/>
<evidence type="ECO:0000250" key="1">
    <source>
        <dbReference type="UniProtKB" id="P26784"/>
    </source>
</evidence>
<evidence type="ECO:0000269" key="2">
    <source>
    </source>
</evidence>
<evidence type="ECO:0000305" key="3"/>